<dbReference type="EC" id="3.1.26.-"/>
<dbReference type="EMBL" id="AC105363">
    <property type="protein sequence ID" value="AAM52322.1"/>
    <property type="molecule type" value="Genomic_DNA"/>
</dbReference>
<dbReference type="EMBL" id="DP000009">
    <property type="protein sequence ID" value="ABF93701.1"/>
    <property type="molecule type" value="Genomic_DNA"/>
</dbReference>
<dbReference type="EMBL" id="AP008209">
    <property type="protein sequence ID" value="BAF10710.2"/>
    <property type="status" value="ALT_SEQ"/>
    <property type="molecule type" value="Genomic_DNA"/>
</dbReference>
<dbReference type="EMBL" id="AP014959">
    <property type="status" value="NOT_ANNOTATED_CDS"/>
    <property type="molecule type" value="Genomic_DNA"/>
</dbReference>
<dbReference type="EMBL" id="CM000140">
    <property type="protein sequence ID" value="EAZ25399.1"/>
    <property type="molecule type" value="Genomic_DNA"/>
</dbReference>
<dbReference type="SMR" id="Q8LMR2"/>
<dbReference type="FunCoup" id="Q8LMR2">
    <property type="interactions" value="1709"/>
</dbReference>
<dbReference type="STRING" id="39947.Q8LMR2"/>
<dbReference type="PaxDb" id="39947-Q8LMR2"/>
<dbReference type="EnsemblPlants" id="Os03t0121800-01">
    <property type="protein sequence ID" value="Os03t0121800-01"/>
    <property type="gene ID" value="Os03g0121800"/>
</dbReference>
<dbReference type="Gramene" id="Os03t0121800-01">
    <property type="protein sequence ID" value="Os03t0121800-01"/>
    <property type="gene ID" value="Os03g0121800"/>
</dbReference>
<dbReference type="KEGG" id="dosa:Os03g0121800"/>
<dbReference type="eggNOG" id="KOG0701">
    <property type="taxonomic scope" value="Eukaryota"/>
</dbReference>
<dbReference type="HOGENOM" id="CLU_805080_0_0_1"/>
<dbReference type="InParanoid" id="Q8LMR2"/>
<dbReference type="Proteomes" id="UP000000763">
    <property type="component" value="Chromosome 3"/>
</dbReference>
<dbReference type="Proteomes" id="UP000007752">
    <property type="component" value="Chromosome 3"/>
</dbReference>
<dbReference type="Proteomes" id="UP000059680">
    <property type="component" value="Chromosome 3"/>
</dbReference>
<dbReference type="GO" id="GO:0005737">
    <property type="term" value="C:cytoplasm"/>
    <property type="evidence" value="ECO:0000318"/>
    <property type="project" value="GO_Central"/>
</dbReference>
<dbReference type="GO" id="GO:0005634">
    <property type="term" value="C:nucleus"/>
    <property type="evidence" value="ECO:0000318"/>
    <property type="project" value="GO_Central"/>
</dbReference>
<dbReference type="GO" id="GO:0005524">
    <property type="term" value="F:ATP binding"/>
    <property type="evidence" value="ECO:0007669"/>
    <property type="project" value="UniProtKB-KW"/>
</dbReference>
<dbReference type="GO" id="GO:0004386">
    <property type="term" value="F:helicase activity"/>
    <property type="evidence" value="ECO:0007669"/>
    <property type="project" value="UniProtKB-KW"/>
</dbReference>
<dbReference type="GO" id="GO:0046872">
    <property type="term" value="F:metal ion binding"/>
    <property type="evidence" value="ECO:0007669"/>
    <property type="project" value="UniProtKB-KW"/>
</dbReference>
<dbReference type="GO" id="GO:0004525">
    <property type="term" value="F:ribonuclease III activity"/>
    <property type="evidence" value="ECO:0000318"/>
    <property type="project" value="GO_Central"/>
</dbReference>
<dbReference type="GO" id="GO:0003723">
    <property type="term" value="F:RNA binding"/>
    <property type="evidence" value="ECO:0000318"/>
    <property type="project" value="GO_Central"/>
</dbReference>
<dbReference type="GO" id="GO:0035196">
    <property type="term" value="P:miRNA processing"/>
    <property type="evidence" value="ECO:0000315"/>
    <property type="project" value="UniProtKB"/>
</dbReference>
<dbReference type="GO" id="GO:0030422">
    <property type="term" value="P:siRNA processing"/>
    <property type="evidence" value="ECO:0000318"/>
    <property type="project" value="GO_Central"/>
</dbReference>
<dbReference type="CDD" id="cd18034">
    <property type="entry name" value="DEXHc_dicer"/>
    <property type="match status" value="1"/>
</dbReference>
<dbReference type="CDD" id="cd19869">
    <property type="entry name" value="DSRM_DCL_plant"/>
    <property type="match status" value="1"/>
</dbReference>
<dbReference type="CDD" id="cd02844">
    <property type="entry name" value="PAZ_CAF_like"/>
    <property type="match status" value="1"/>
</dbReference>
<dbReference type="CDD" id="cd00593">
    <property type="entry name" value="RIBOc"/>
    <property type="match status" value="2"/>
</dbReference>
<dbReference type="CDD" id="cd18802">
    <property type="entry name" value="SF2_C_dicer"/>
    <property type="match status" value="1"/>
</dbReference>
<dbReference type="FunFam" id="2.170.260.10:FF:000005">
    <property type="entry name" value="Endoribonuclease Dicer 1"/>
    <property type="match status" value="1"/>
</dbReference>
<dbReference type="FunFam" id="3.40.50.300:FF:002958">
    <property type="entry name" value="Endoribonuclease Dicer homolog 1"/>
    <property type="match status" value="1"/>
</dbReference>
<dbReference type="FunFam" id="3.30.160.20:FF:000032">
    <property type="entry name" value="endoribonuclease Dicer homolog 1"/>
    <property type="match status" value="1"/>
</dbReference>
<dbReference type="FunFam" id="1.10.1520.10:FF:000004">
    <property type="entry name" value="Endoribonuclease dicer-like 1"/>
    <property type="match status" value="1"/>
</dbReference>
<dbReference type="FunFam" id="3.30.160.380:FF:000001">
    <property type="entry name" value="Endoribonuclease dicer-like 1"/>
    <property type="match status" value="1"/>
</dbReference>
<dbReference type="FunFam" id="3.40.50.300:FF:000420">
    <property type="entry name" value="Endoribonuclease dicer-like 1"/>
    <property type="match status" value="1"/>
</dbReference>
<dbReference type="FunFam" id="1.10.1520.10:FF:000007">
    <property type="entry name" value="Endoribonuclease dicer-like protein"/>
    <property type="match status" value="1"/>
</dbReference>
<dbReference type="FunFam" id="3.30.160.20:FF:000031">
    <property type="entry name" value="Endoribonuclease Dicer-like protein 1"/>
    <property type="match status" value="1"/>
</dbReference>
<dbReference type="FunFam" id="3.40.50.300:FF:005053">
    <property type="entry name" value="Os03g0121901 protein"/>
    <property type="match status" value="1"/>
</dbReference>
<dbReference type="Gene3D" id="3.30.160.20">
    <property type="match status" value="2"/>
</dbReference>
<dbReference type="Gene3D" id="3.30.160.380">
    <property type="entry name" value="Dicer dimerisation domain"/>
    <property type="match status" value="1"/>
</dbReference>
<dbReference type="Gene3D" id="3.40.50.300">
    <property type="entry name" value="P-loop containing nucleotide triphosphate hydrolases"/>
    <property type="match status" value="3"/>
</dbReference>
<dbReference type="Gene3D" id="2.170.260.10">
    <property type="entry name" value="paz domain"/>
    <property type="match status" value="1"/>
</dbReference>
<dbReference type="Gene3D" id="1.10.1520.10">
    <property type="entry name" value="Ribonuclease III domain"/>
    <property type="match status" value="2"/>
</dbReference>
<dbReference type="InterPro" id="IPR038248">
    <property type="entry name" value="Dicer_dimer_sf"/>
</dbReference>
<dbReference type="InterPro" id="IPR005034">
    <property type="entry name" value="Dicer_dimerisation_dom"/>
</dbReference>
<dbReference type="InterPro" id="IPR014720">
    <property type="entry name" value="dsRBD_dom"/>
</dbReference>
<dbReference type="InterPro" id="IPR014001">
    <property type="entry name" value="Helicase_ATP-bd"/>
</dbReference>
<dbReference type="InterPro" id="IPR001650">
    <property type="entry name" value="Helicase_C-like"/>
</dbReference>
<dbReference type="InterPro" id="IPR027417">
    <property type="entry name" value="P-loop_NTPase"/>
</dbReference>
<dbReference type="InterPro" id="IPR003100">
    <property type="entry name" value="PAZ_dom"/>
</dbReference>
<dbReference type="InterPro" id="IPR036085">
    <property type="entry name" value="PAZ_dom_sf"/>
</dbReference>
<dbReference type="InterPro" id="IPR000999">
    <property type="entry name" value="RNase_III_dom"/>
</dbReference>
<dbReference type="InterPro" id="IPR036389">
    <property type="entry name" value="RNase_III_sf"/>
</dbReference>
<dbReference type="PANTHER" id="PTHR14950">
    <property type="entry name" value="DICER-RELATED"/>
    <property type="match status" value="1"/>
</dbReference>
<dbReference type="PANTHER" id="PTHR14950:SF37">
    <property type="entry name" value="ENDORIBONUCLEASE DICER"/>
    <property type="match status" value="1"/>
</dbReference>
<dbReference type="Pfam" id="PF03368">
    <property type="entry name" value="Dicer_dimer"/>
    <property type="match status" value="1"/>
</dbReference>
<dbReference type="Pfam" id="PF14709">
    <property type="entry name" value="DND1_DSRM"/>
    <property type="match status" value="1"/>
</dbReference>
<dbReference type="Pfam" id="PF00035">
    <property type="entry name" value="dsrm"/>
    <property type="match status" value="1"/>
</dbReference>
<dbReference type="Pfam" id="PF00271">
    <property type="entry name" value="Helicase_C"/>
    <property type="match status" value="1"/>
</dbReference>
<dbReference type="Pfam" id="PF02170">
    <property type="entry name" value="PAZ"/>
    <property type="match status" value="1"/>
</dbReference>
<dbReference type="Pfam" id="PF00636">
    <property type="entry name" value="Ribonuclease_3"/>
    <property type="match status" value="2"/>
</dbReference>
<dbReference type="SMART" id="SM00487">
    <property type="entry name" value="DEXDc"/>
    <property type="match status" value="1"/>
</dbReference>
<dbReference type="SMART" id="SM00358">
    <property type="entry name" value="DSRM"/>
    <property type="match status" value="2"/>
</dbReference>
<dbReference type="SMART" id="SM00490">
    <property type="entry name" value="HELICc"/>
    <property type="match status" value="1"/>
</dbReference>
<dbReference type="SMART" id="SM00949">
    <property type="entry name" value="PAZ"/>
    <property type="match status" value="1"/>
</dbReference>
<dbReference type="SMART" id="SM00535">
    <property type="entry name" value="RIBOc"/>
    <property type="match status" value="2"/>
</dbReference>
<dbReference type="SUPFAM" id="SSF54768">
    <property type="entry name" value="dsRNA-binding domain-like"/>
    <property type="match status" value="2"/>
</dbReference>
<dbReference type="SUPFAM" id="SSF52540">
    <property type="entry name" value="P-loop containing nucleoside triphosphate hydrolases"/>
    <property type="match status" value="1"/>
</dbReference>
<dbReference type="SUPFAM" id="SSF101690">
    <property type="entry name" value="PAZ domain"/>
    <property type="match status" value="1"/>
</dbReference>
<dbReference type="SUPFAM" id="SSF69065">
    <property type="entry name" value="RNase III domain-like"/>
    <property type="match status" value="2"/>
</dbReference>
<dbReference type="PROSITE" id="PS51327">
    <property type="entry name" value="DICER_DSRBF"/>
    <property type="match status" value="1"/>
</dbReference>
<dbReference type="PROSITE" id="PS50137">
    <property type="entry name" value="DS_RBD"/>
    <property type="match status" value="2"/>
</dbReference>
<dbReference type="PROSITE" id="PS51192">
    <property type="entry name" value="HELICASE_ATP_BIND_1"/>
    <property type="match status" value="1"/>
</dbReference>
<dbReference type="PROSITE" id="PS51194">
    <property type="entry name" value="HELICASE_CTER"/>
    <property type="match status" value="1"/>
</dbReference>
<dbReference type="PROSITE" id="PS50821">
    <property type="entry name" value="PAZ"/>
    <property type="match status" value="1"/>
</dbReference>
<dbReference type="PROSITE" id="PS00517">
    <property type="entry name" value="RNASE_3_1"/>
    <property type="match status" value="1"/>
</dbReference>
<dbReference type="PROSITE" id="PS50142">
    <property type="entry name" value="RNASE_3_2"/>
    <property type="match status" value="2"/>
</dbReference>
<name>DCL1_ORYSJ</name>
<gene>
    <name type="primary">DCL1</name>
    <name type="ordered locus">Os03g0121800</name>
    <name type="ordered locus">LOC_Os03g02970</name>
    <name type="ORF">OJ1705B08.11</name>
    <name type="ORF">OsJ_09217</name>
</gene>
<feature type="chain" id="PRO_0000378416" description="Endoribonuclease Dicer homolog 1">
    <location>
        <begin position="1"/>
        <end position="1883"/>
    </location>
</feature>
<feature type="domain" description="Helicase ATP-binding" evidence="5">
    <location>
        <begin position="274"/>
        <end position="413"/>
    </location>
</feature>
<feature type="domain" description="Helicase C-terminal" evidence="6">
    <location>
        <begin position="629"/>
        <end position="789"/>
    </location>
</feature>
<feature type="domain" description="Dicer dsRNA-binding fold" evidence="7">
    <location>
        <begin position="817"/>
        <end position="912"/>
    </location>
</feature>
<feature type="domain" description="PAZ" evidence="2">
    <location>
        <begin position="1163"/>
        <end position="1296"/>
    </location>
</feature>
<feature type="domain" description="RNase III 1" evidence="3">
    <location>
        <begin position="1320"/>
        <end position="1498"/>
    </location>
</feature>
<feature type="domain" description="RNase III 2" evidence="3">
    <location>
        <begin position="1538"/>
        <end position="1686"/>
    </location>
</feature>
<feature type="domain" description="DRBM 1" evidence="4">
    <location>
        <begin position="1712"/>
        <end position="1775"/>
    </location>
</feature>
<feature type="domain" description="DRBM 2" evidence="4">
    <location>
        <begin position="1797"/>
        <end position="1872"/>
    </location>
</feature>
<feature type="region of interest" description="Disordered" evidence="8">
    <location>
        <begin position="71"/>
        <end position="97"/>
    </location>
</feature>
<feature type="region of interest" description="Disordered" evidence="8">
    <location>
        <begin position="129"/>
        <end position="188"/>
    </location>
</feature>
<feature type="region of interest" description="Disordered" evidence="8">
    <location>
        <begin position="221"/>
        <end position="262"/>
    </location>
</feature>
<feature type="region of interest" description="Disordered" evidence="8">
    <location>
        <begin position="577"/>
        <end position="604"/>
    </location>
</feature>
<feature type="region of interest" description="Disordered" evidence="8">
    <location>
        <begin position="901"/>
        <end position="928"/>
    </location>
</feature>
<feature type="short sequence motif" description="DECH box" evidence="1">
    <location>
        <begin position="358"/>
        <end position="361"/>
    </location>
</feature>
<feature type="compositionally biased region" description="Pro residues" evidence="8">
    <location>
        <begin position="75"/>
        <end position="96"/>
    </location>
</feature>
<feature type="compositionally biased region" description="Basic and acidic residues" evidence="8">
    <location>
        <begin position="129"/>
        <end position="138"/>
    </location>
</feature>
<feature type="compositionally biased region" description="Basic and acidic residues" evidence="8">
    <location>
        <begin position="228"/>
        <end position="262"/>
    </location>
</feature>
<feature type="compositionally biased region" description="Basic and acidic residues" evidence="8">
    <location>
        <begin position="907"/>
        <end position="916"/>
    </location>
</feature>
<feature type="binding site" evidence="5">
    <location>
        <begin position="287"/>
        <end position="294"/>
    </location>
    <ligand>
        <name>ATP</name>
        <dbReference type="ChEBI" id="CHEBI:30616"/>
    </ligand>
</feature>
<feature type="binding site" evidence="1">
    <location>
        <position position="1576"/>
    </location>
    <ligand>
        <name>Mg(2+)</name>
        <dbReference type="ChEBI" id="CHEBI:18420"/>
    </ligand>
</feature>
<feature type="binding site" evidence="1">
    <location>
        <position position="1672"/>
    </location>
    <ligand>
        <name>Mg(2+)</name>
        <dbReference type="ChEBI" id="CHEBI:18420"/>
    </ligand>
</feature>
<feature type="binding site" evidence="1">
    <location>
        <position position="1675"/>
    </location>
    <ligand>
        <name>Mg(2+)</name>
        <dbReference type="ChEBI" id="CHEBI:18420"/>
    </ligand>
</feature>
<feature type="site" description="Important for activity" evidence="1">
    <location>
        <position position="1668"/>
    </location>
</feature>
<feature type="sequence conflict" description="In Ref. 5; EAZ25399." evidence="11" ref="5">
    <original>P</original>
    <variation>T</variation>
    <location>
        <position position="79"/>
    </location>
</feature>
<accession>Q8LMR2</accession>
<accession>A3ADL0</accession>
<sequence length="1883" mass="210203">MAGGGGVGGGAGEHAAAAYWYDACEDGASLLCGIDFAASADFDPGLIPAMDTGADDGFVAEIDRILESINAESSPAPPPPPPPPLPEPVPVAPPELPIQEKQLQVASAPVANNAVAVVGVVQRSKGVVARKEPRRESHGCAANGGGGGEWRDGKRPRLASGGVGGPRQEWRRRPMLPPPPSRGWDDRRGRRDFDRVRKHEHHRREARGFWERDRGGKMVFRSGTWEQESDREAKRARTQDGGSMEKKAEADRMGAAQREKPVAEERARQYQLEVLEQAKSRNTIAFLETGAGKTLIAVLLIKSVCDKMLKENKKMLAVFLVPKVPLVYQVLVMTAQILLNILRHSIIKMDAIHLLILDECHHAVKKHPYSLVMSEFYHTTPKEKRPAVFGMTASPVNLKGVTSQEDCAIKIRNLESKLDSVVCTIKDRKELEKHVPMPLEVVVQYDKAATLWSLHEQIKQMESTVEEAALSSSKRTKWQFMGARDAGSRDELRLVYGVSERTESDGAANLIQKLRAINYALGELGQWCAYKVAQSFLTALQNDERANYQVDVKFQESYLKKVVDLLHCQLTEGAAMKSETSDVEMQNTEKHNTNDLEEGELPDSHGEHVDEVIGAAVADGKVTPRVQALIKILLKYQHTEDFRAIIFVERVVTALVLPKVLAELPSLSFIRCASLIGHNNNQEMRACQMQDTISKFRDGRVTLLVATSVAEEGLDIRQCNVVIRFDLAKTVLAYIQSRGRARKPGSDYILMLERGNISHETFLRNARNSEETLRKEAMERTDLSHLDGTSVLSPVDTSPGSMYQVESTGAVVSLNSAVGLIHFYCSQLPSDRYSILHPEFIMQKYEKPGGSVEYSCKLQLPCNAPFEKLEGPICSSIRLAQQAVCLAACKKLHEMGAFTDTLLPDRGSGEGEKTEQNDEGEPLPGTARHREFYPEGVADILRGEWILSGRDGYQNSQFIKLYMYSVNCVNVGTSKDPFVTQLSNFAIIFGNELDAEVLSTTMDLFVARTMITKASLVFRGRIEITESQLVLLKSFHVRLMSIVLDVDVDPSTTPWDPAKAYLFVPVGAEKCTDPLREIDWTLVNNIVNTDAWNNPLQRARPDVYLGTNERTLGGDRREYGFGKLRHGTAFGQKAHPTYGIRGAIAEFDIVKASGLVPARDRGHFSDYQNQGKLFMADSCWNAKDLAGMVVTAAHSGKRFYVDCICYNMNAENSFPRKEGYLGPLEYSSYADYYKQKYGVELIYRKQPLIRARGVSYCKNLLSPRFEHSDAREGDFSENLDKTYYVYLPPELCLVHPLPGSLVRGAQRLPSIMRRVESMLLAVQLKDIIDYPVPATKILEALTAASCQETLCYERAELLGDAYLKWVVSRFLFLKYPQKHEGQLTRMRQQMVSNMVLYQYALNKTLQSYIQADRFAPSRWAAPGVLPVFDEESREYEPSIFDEESTGCELQKESYDDYADNMQEDGEIEGDSSCYRVLSSKTLADVVEALIGVYYVAGGKIAANHLMKWIGIHAELDPEEIPPPKPYDIPESIMRSINFDTLKGVLGIEFQNKGLLVEAITHASRPSSGVSCYQRLEFVGDAVLDHLITRHLFFTYTDLPPGRLTDLRAAAVNNENFARVAVKHKLHVHLRHGSSALETQIREFVKDVQEELLKPGFNSFGLGDCKAPKVLGDIVESIAGAIFLDSGYDTSVVWKVFQPLLHPMVTPETLPMHPVRELQERCQQQAEGLEYKASRAGNIATVEVFVDGVQIGVAQNPQKKMAQKLAARNALVVLKEKETATKKEDERDGEKKNGAQMFTRQTLNDICLRRQWPMPQYRCVNEGGPAHAKRFVYSVRVNTSDRGWTDECIGEPMPSVKKAKDSAAVLLLELLNRDFPDKPDGKQP</sequence>
<reference key="1">
    <citation type="journal article" date="2005" name="Genome Res.">
        <title>Sequence, annotation, and analysis of synteny between rice chromosome 3 and diverged grass species.</title>
        <authorList>
            <consortium name="The rice chromosome 3 sequencing consortium"/>
            <person name="Buell C.R."/>
            <person name="Yuan Q."/>
            <person name="Ouyang S."/>
            <person name="Liu J."/>
            <person name="Zhu W."/>
            <person name="Wang A."/>
            <person name="Maiti R."/>
            <person name="Haas B."/>
            <person name="Wortman J."/>
            <person name="Pertea M."/>
            <person name="Jones K.M."/>
            <person name="Kim M."/>
            <person name="Overton L."/>
            <person name="Tsitrin T."/>
            <person name="Fadrosh D."/>
            <person name="Bera J."/>
            <person name="Weaver B."/>
            <person name="Jin S."/>
            <person name="Johri S."/>
            <person name="Reardon M."/>
            <person name="Webb K."/>
            <person name="Hill J."/>
            <person name="Moffat K."/>
            <person name="Tallon L."/>
            <person name="Van Aken S."/>
            <person name="Lewis M."/>
            <person name="Utterback T."/>
            <person name="Feldblyum T."/>
            <person name="Zismann V."/>
            <person name="Iobst S."/>
            <person name="Hsiao J."/>
            <person name="de Vazeille A.R."/>
            <person name="Salzberg S.L."/>
            <person name="White O."/>
            <person name="Fraser C.M."/>
            <person name="Yu Y."/>
            <person name="Kim H."/>
            <person name="Rambo T."/>
            <person name="Currie J."/>
            <person name="Collura K."/>
            <person name="Kernodle-Thompson S."/>
            <person name="Wei F."/>
            <person name="Kudrna K."/>
            <person name="Ammiraju J.S.S."/>
            <person name="Luo M."/>
            <person name="Goicoechea J.L."/>
            <person name="Wing R.A."/>
            <person name="Henry D."/>
            <person name="Oates R."/>
            <person name="Palmer M."/>
            <person name="Pries G."/>
            <person name="Saski C."/>
            <person name="Simmons J."/>
            <person name="Soderlund C."/>
            <person name="Nelson W."/>
            <person name="de la Bastide M."/>
            <person name="Spiegel L."/>
            <person name="Nascimento L."/>
            <person name="Huang E."/>
            <person name="Preston R."/>
            <person name="Zutavern T."/>
            <person name="Palmer L."/>
            <person name="O'Shaughnessy A."/>
            <person name="Dike S."/>
            <person name="McCombie W.R."/>
            <person name="Minx P."/>
            <person name="Cordum H."/>
            <person name="Wilson R."/>
            <person name="Jin W."/>
            <person name="Lee H.R."/>
            <person name="Jiang J."/>
            <person name="Jackson S."/>
        </authorList>
    </citation>
    <scope>NUCLEOTIDE SEQUENCE [LARGE SCALE GENOMIC DNA]</scope>
    <source>
        <strain>cv. Nipponbare</strain>
    </source>
</reference>
<reference key="2">
    <citation type="journal article" date="2005" name="Nature">
        <title>The map-based sequence of the rice genome.</title>
        <authorList>
            <consortium name="International rice genome sequencing project (IRGSP)"/>
        </authorList>
    </citation>
    <scope>NUCLEOTIDE SEQUENCE [LARGE SCALE GENOMIC DNA]</scope>
    <source>
        <strain>cv. Nipponbare</strain>
    </source>
</reference>
<reference key="3">
    <citation type="journal article" date="2008" name="Nucleic Acids Res.">
        <title>The rice annotation project database (RAP-DB): 2008 update.</title>
        <authorList>
            <consortium name="The rice annotation project (RAP)"/>
        </authorList>
    </citation>
    <scope>GENOME REANNOTATION</scope>
    <source>
        <strain>cv. Nipponbare</strain>
    </source>
</reference>
<reference key="4">
    <citation type="journal article" date="2013" name="Rice">
        <title>Improvement of the Oryza sativa Nipponbare reference genome using next generation sequence and optical map data.</title>
        <authorList>
            <person name="Kawahara Y."/>
            <person name="de la Bastide M."/>
            <person name="Hamilton J.P."/>
            <person name="Kanamori H."/>
            <person name="McCombie W.R."/>
            <person name="Ouyang S."/>
            <person name="Schwartz D.C."/>
            <person name="Tanaka T."/>
            <person name="Wu J."/>
            <person name="Zhou S."/>
            <person name="Childs K.L."/>
            <person name="Davidson R.M."/>
            <person name="Lin H."/>
            <person name="Quesada-Ocampo L."/>
            <person name="Vaillancourt B."/>
            <person name="Sakai H."/>
            <person name="Lee S.S."/>
            <person name="Kim J."/>
            <person name="Numa H."/>
            <person name="Itoh T."/>
            <person name="Buell C.R."/>
            <person name="Matsumoto T."/>
        </authorList>
    </citation>
    <scope>GENOME REANNOTATION</scope>
    <source>
        <strain>cv. Nipponbare</strain>
    </source>
</reference>
<reference key="5">
    <citation type="journal article" date="2005" name="PLoS Biol.">
        <title>The genomes of Oryza sativa: a history of duplications.</title>
        <authorList>
            <person name="Yu J."/>
            <person name="Wang J."/>
            <person name="Lin W."/>
            <person name="Li S."/>
            <person name="Li H."/>
            <person name="Zhou J."/>
            <person name="Ni P."/>
            <person name="Dong W."/>
            <person name="Hu S."/>
            <person name="Zeng C."/>
            <person name="Zhang J."/>
            <person name="Zhang Y."/>
            <person name="Li R."/>
            <person name="Xu Z."/>
            <person name="Li S."/>
            <person name="Li X."/>
            <person name="Zheng H."/>
            <person name="Cong L."/>
            <person name="Lin L."/>
            <person name="Yin J."/>
            <person name="Geng J."/>
            <person name="Li G."/>
            <person name="Shi J."/>
            <person name="Liu J."/>
            <person name="Lv H."/>
            <person name="Li J."/>
            <person name="Wang J."/>
            <person name="Deng Y."/>
            <person name="Ran L."/>
            <person name="Shi X."/>
            <person name="Wang X."/>
            <person name="Wu Q."/>
            <person name="Li C."/>
            <person name="Ren X."/>
            <person name="Wang J."/>
            <person name="Wang X."/>
            <person name="Li D."/>
            <person name="Liu D."/>
            <person name="Zhang X."/>
            <person name="Ji Z."/>
            <person name="Zhao W."/>
            <person name="Sun Y."/>
            <person name="Zhang Z."/>
            <person name="Bao J."/>
            <person name="Han Y."/>
            <person name="Dong L."/>
            <person name="Ji J."/>
            <person name="Chen P."/>
            <person name="Wu S."/>
            <person name="Liu J."/>
            <person name="Xiao Y."/>
            <person name="Bu D."/>
            <person name="Tan J."/>
            <person name="Yang L."/>
            <person name="Ye C."/>
            <person name="Zhang J."/>
            <person name="Xu J."/>
            <person name="Zhou Y."/>
            <person name="Yu Y."/>
            <person name="Zhang B."/>
            <person name="Zhuang S."/>
            <person name="Wei H."/>
            <person name="Liu B."/>
            <person name="Lei M."/>
            <person name="Yu H."/>
            <person name="Li Y."/>
            <person name="Xu H."/>
            <person name="Wei S."/>
            <person name="He X."/>
            <person name="Fang L."/>
            <person name="Zhang Z."/>
            <person name="Zhang Y."/>
            <person name="Huang X."/>
            <person name="Su Z."/>
            <person name="Tong W."/>
            <person name="Li J."/>
            <person name="Tong Z."/>
            <person name="Li S."/>
            <person name="Ye J."/>
            <person name="Wang L."/>
            <person name="Fang L."/>
            <person name="Lei T."/>
            <person name="Chen C.-S."/>
            <person name="Chen H.-C."/>
            <person name="Xu Z."/>
            <person name="Li H."/>
            <person name="Huang H."/>
            <person name="Zhang F."/>
            <person name="Xu H."/>
            <person name="Li N."/>
            <person name="Zhao C."/>
            <person name="Li S."/>
            <person name="Dong L."/>
            <person name="Huang Y."/>
            <person name="Li L."/>
            <person name="Xi Y."/>
            <person name="Qi Q."/>
            <person name="Li W."/>
            <person name="Zhang B."/>
            <person name="Hu W."/>
            <person name="Zhang Y."/>
            <person name="Tian X."/>
            <person name="Jiao Y."/>
            <person name="Liang X."/>
            <person name="Jin J."/>
            <person name="Gao L."/>
            <person name="Zheng W."/>
            <person name="Hao B."/>
            <person name="Liu S.-M."/>
            <person name="Wang W."/>
            <person name="Yuan L."/>
            <person name="Cao M."/>
            <person name="McDermott J."/>
            <person name="Samudrala R."/>
            <person name="Wang J."/>
            <person name="Wong G.K.-S."/>
            <person name="Yang H."/>
        </authorList>
    </citation>
    <scope>NUCLEOTIDE SEQUENCE [LARGE SCALE GENOMIC DNA]</scope>
    <source>
        <strain>cv. Nipponbare</strain>
    </source>
</reference>
<reference key="6">
    <citation type="journal article" date="2005" name="Plant Physiol.">
        <title>Loss of function of OsDCL1 affects microRNA accumulation and causes developmental defects in rice.</title>
        <authorList>
            <person name="Liu B."/>
            <person name="Li P."/>
            <person name="Li X."/>
            <person name="Liu C."/>
            <person name="Cao S."/>
            <person name="Chu C."/>
            <person name="Cao X."/>
        </authorList>
    </citation>
    <scope>FUNCTION</scope>
    <scope>DISRUPTION PHENOTYPE</scope>
</reference>
<reference key="7">
    <citation type="journal article" date="2008" name="BMC Genomics">
        <title>Genome-wide identification, organization and phylogenetic analysis of dicer-like, argonaute and RNA-dependent RNA polymerase gene families and their expression analysis during reproductive development and stress in rice.</title>
        <authorList>
            <person name="Kapoor M."/>
            <person name="Arora R."/>
            <person name="Lama T."/>
            <person name="Nijhawan A."/>
            <person name="Khurana J.P."/>
            <person name="Tyagi A.K."/>
            <person name="Kapoor S."/>
        </authorList>
    </citation>
    <scope>GENE FAMILY</scope>
    <scope>NOMENCLATURE</scope>
</reference>
<reference key="8">
    <citation type="journal article" date="2008" name="Proc. Natl. Acad. Sci. U.S.A.">
        <title>Genome-wide analysis for discovery of rice microRNAs reveals natural antisense microRNAs (nat-miRNAs).</title>
        <authorList>
            <person name="Lu C."/>
            <person name="Jeong D.-H."/>
            <person name="Kulkarni K."/>
            <person name="Pillay M."/>
            <person name="Nobuta K."/>
            <person name="German R."/>
            <person name="Thatcher S.R."/>
            <person name="Maher C."/>
            <person name="Zhang L."/>
            <person name="Ware D."/>
            <person name="Liu B."/>
            <person name="Cao X."/>
            <person name="Meyers B.C."/>
            <person name="Green P.J."/>
        </authorList>
    </citation>
    <scope>FUNCTION</scope>
</reference>
<organism>
    <name type="scientific">Oryza sativa subsp. japonica</name>
    <name type="common">Rice</name>
    <dbReference type="NCBI Taxonomy" id="39947"/>
    <lineage>
        <taxon>Eukaryota</taxon>
        <taxon>Viridiplantae</taxon>
        <taxon>Streptophyta</taxon>
        <taxon>Embryophyta</taxon>
        <taxon>Tracheophyta</taxon>
        <taxon>Spermatophyta</taxon>
        <taxon>Magnoliopsida</taxon>
        <taxon>Liliopsida</taxon>
        <taxon>Poales</taxon>
        <taxon>Poaceae</taxon>
        <taxon>BOP clade</taxon>
        <taxon>Oryzoideae</taxon>
        <taxon>Oryzeae</taxon>
        <taxon>Oryzinae</taxon>
        <taxon>Oryza</taxon>
        <taxon>Oryza sativa</taxon>
    </lineage>
</organism>
<evidence type="ECO:0000250" key="1"/>
<evidence type="ECO:0000255" key="2">
    <source>
        <dbReference type="PROSITE-ProRule" id="PRU00142"/>
    </source>
</evidence>
<evidence type="ECO:0000255" key="3">
    <source>
        <dbReference type="PROSITE-ProRule" id="PRU00177"/>
    </source>
</evidence>
<evidence type="ECO:0000255" key="4">
    <source>
        <dbReference type="PROSITE-ProRule" id="PRU00266"/>
    </source>
</evidence>
<evidence type="ECO:0000255" key="5">
    <source>
        <dbReference type="PROSITE-ProRule" id="PRU00541"/>
    </source>
</evidence>
<evidence type="ECO:0000255" key="6">
    <source>
        <dbReference type="PROSITE-ProRule" id="PRU00542"/>
    </source>
</evidence>
<evidence type="ECO:0000255" key="7">
    <source>
        <dbReference type="PROSITE-ProRule" id="PRU00657"/>
    </source>
</evidence>
<evidence type="ECO:0000256" key="8">
    <source>
        <dbReference type="SAM" id="MobiDB-lite"/>
    </source>
</evidence>
<evidence type="ECO:0000269" key="9">
    <source>
    </source>
</evidence>
<evidence type="ECO:0000269" key="10">
    <source>
    </source>
</evidence>
<evidence type="ECO:0000305" key="11"/>
<proteinExistence type="inferred from homology"/>
<keyword id="KW-0067">ATP-binding</keyword>
<keyword id="KW-0255">Endonuclease</keyword>
<keyword id="KW-0347">Helicase</keyword>
<keyword id="KW-0378">Hydrolase</keyword>
<keyword id="KW-0460">Magnesium</keyword>
<keyword id="KW-0464">Manganese</keyword>
<keyword id="KW-0479">Metal-binding</keyword>
<keyword id="KW-0540">Nuclease</keyword>
<keyword id="KW-0547">Nucleotide-binding</keyword>
<keyword id="KW-0539">Nucleus</keyword>
<keyword id="KW-1185">Reference proteome</keyword>
<keyword id="KW-0677">Repeat</keyword>
<keyword id="KW-0694">RNA-binding</keyword>
<keyword id="KW-0943">RNA-mediated gene silencing</keyword>
<comment type="function">
    <text evidence="9 10">Involved in the RNA silencing pathway. Cleaves double-stranded RNA to produce microRNAs (miRNAs) of 21-24 nucleotides which target the selective destruction of complementary RNAs. Regulates by this way the development of the plant. May not be involved in small interfering RNAs (siRNAs) production.</text>
</comment>
<comment type="cofactor">
    <cofactor evidence="1">
        <name>Mg(2+)</name>
        <dbReference type="ChEBI" id="CHEBI:18420"/>
    </cofactor>
    <cofactor evidence="1">
        <name>Mn(2+)</name>
        <dbReference type="ChEBI" id="CHEBI:29035"/>
    </cofactor>
</comment>
<comment type="subunit">
    <text evidence="1">May interact with ARGONAUTE1 or PINHEAD through their common PAZ domains.</text>
</comment>
<comment type="subcellular location">
    <subcellularLocation>
        <location evidence="11">Nucleus</location>
    </subcellularLocation>
</comment>
<comment type="disruption phenotype">
    <text evidence="9">Severe dwarfism and dark green color. Seedling viability compromised.</text>
</comment>
<comment type="similarity">
    <text evidence="7">Belongs to the helicase family. Dicer subfamily.</text>
</comment>
<comment type="sequence caution" evidence="11">
    <conflict type="erroneous gene model prediction">
        <sequence resource="EMBL-CDS" id="BAF10710"/>
    </conflict>
</comment>
<protein>
    <recommendedName>
        <fullName>Endoribonuclease Dicer homolog 1</fullName>
    </recommendedName>
    <alternativeName>
        <fullName>Dicer-like protein 1</fullName>
        <shortName>OsDCL1</shortName>
        <ecNumber>3.1.26.-</ecNumber>
    </alternativeName>
</protein>